<evidence type="ECO:0000250" key="1"/>
<evidence type="ECO:0000255" key="2"/>
<evidence type="ECO:0000255" key="3">
    <source>
        <dbReference type="PROSITE-ProRule" id="PRU10089"/>
    </source>
</evidence>
<evidence type="ECO:0000255" key="4">
    <source>
        <dbReference type="PROSITE-ProRule" id="PRU10090"/>
    </source>
</evidence>
<evidence type="ECO:0000305" key="5"/>
<gene>
    <name type="primary">Ctsq</name>
    <name type="synonym">Catq</name>
</gene>
<comment type="subcellular location">
    <subcellularLocation>
        <location evidence="5">Lysosome</location>
    </subcellularLocation>
</comment>
<comment type="tissue specificity">
    <text>Highly expressed in placenta.</text>
</comment>
<comment type="similarity">
    <text evidence="3 4">Belongs to the peptidase C1 family.</text>
</comment>
<reference key="1">
    <citation type="journal article" date="2000" name="Biochem. Biophys. Res. Commun.">
        <title>Cathepsin Q, a novel lysosomal cysteine protease highly expressed in placenta.</title>
        <authorList>
            <person name="Sol-Church K."/>
            <person name="Frenck J."/>
            <person name="Mason R.W."/>
        </authorList>
    </citation>
    <scope>NUCLEOTIDE SEQUENCE [MRNA]</scope>
    <source>
        <strain>Wistar</strain>
        <tissue>Placenta</tissue>
    </source>
</reference>
<organism>
    <name type="scientific">Rattus norvegicus</name>
    <name type="common">Rat</name>
    <dbReference type="NCBI Taxonomy" id="10116"/>
    <lineage>
        <taxon>Eukaryota</taxon>
        <taxon>Metazoa</taxon>
        <taxon>Chordata</taxon>
        <taxon>Craniata</taxon>
        <taxon>Vertebrata</taxon>
        <taxon>Euteleostomi</taxon>
        <taxon>Mammalia</taxon>
        <taxon>Eutheria</taxon>
        <taxon>Euarchontoglires</taxon>
        <taxon>Glires</taxon>
        <taxon>Rodentia</taxon>
        <taxon>Myomorpha</taxon>
        <taxon>Muroidea</taxon>
        <taxon>Muridae</taxon>
        <taxon>Murinae</taxon>
        <taxon>Rattus</taxon>
    </lineage>
</organism>
<dbReference type="EC" id="3.4.22.-"/>
<dbReference type="EMBL" id="AF187323">
    <property type="protein sequence ID" value="AAF01247.1"/>
    <property type="molecule type" value="mRNA"/>
</dbReference>
<dbReference type="PIR" id="JC7183">
    <property type="entry name" value="JC7183"/>
</dbReference>
<dbReference type="RefSeq" id="NP_640355.1">
    <property type="nucleotide sequence ID" value="NM_139262.2"/>
</dbReference>
<dbReference type="SMR" id="Q9QZE3"/>
<dbReference type="FunCoup" id="Q9QZE3">
    <property type="interactions" value="25"/>
</dbReference>
<dbReference type="STRING" id="10116.ENSRNOP00000024208"/>
<dbReference type="MEROPS" id="C01.039"/>
<dbReference type="GlyCosmos" id="Q9QZE3">
    <property type="glycosylation" value="2 sites, No reported glycans"/>
</dbReference>
<dbReference type="GlyGen" id="Q9QZE3">
    <property type="glycosylation" value="2 sites"/>
</dbReference>
<dbReference type="PaxDb" id="10116-ENSRNOP00000024208"/>
<dbReference type="Ensembl" id="ENSRNOT00000073585.3">
    <property type="protein sequence ID" value="ENSRNOP00000066947.3"/>
    <property type="gene ID" value="ENSRNOG00000048693.3"/>
</dbReference>
<dbReference type="GeneID" id="246147"/>
<dbReference type="KEGG" id="rno:246147"/>
<dbReference type="UCSC" id="RGD:631421">
    <property type="organism name" value="rat"/>
</dbReference>
<dbReference type="AGR" id="RGD:631421"/>
<dbReference type="CTD" id="104002"/>
<dbReference type="RGD" id="631421">
    <property type="gene designation" value="Ctsq"/>
</dbReference>
<dbReference type="VEuPathDB" id="HostDB:ENSRNOG00000017946"/>
<dbReference type="eggNOG" id="KOG1543">
    <property type="taxonomic scope" value="Eukaryota"/>
</dbReference>
<dbReference type="GeneTree" id="ENSGT00940000153321"/>
<dbReference type="HOGENOM" id="CLU_012184_1_2_1"/>
<dbReference type="InParanoid" id="Q9QZE3"/>
<dbReference type="OMA" id="CWAFPVT"/>
<dbReference type="OrthoDB" id="10253408at2759"/>
<dbReference type="PhylomeDB" id="Q9QZE3"/>
<dbReference type="TreeFam" id="TF313739"/>
<dbReference type="PRO" id="PR:Q9QZE3"/>
<dbReference type="Proteomes" id="UP000002494">
    <property type="component" value="Chromosome 17"/>
</dbReference>
<dbReference type="GO" id="GO:0005615">
    <property type="term" value="C:extracellular space"/>
    <property type="evidence" value="ECO:0000318"/>
    <property type="project" value="GO_Central"/>
</dbReference>
<dbReference type="GO" id="GO:0005764">
    <property type="term" value="C:lysosome"/>
    <property type="evidence" value="ECO:0000318"/>
    <property type="project" value="GO_Central"/>
</dbReference>
<dbReference type="GO" id="GO:0004197">
    <property type="term" value="F:cysteine-type endopeptidase activity"/>
    <property type="evidence" value="ECO:0000318"/>
    <property type="project" value="GO_Central"/>
</dbReference>
<dbReference type="GO" id="GO:0051603">
    <property type="term" value="P:proteolysis involved in protein catabolic process"/>
    <property type="evidence" value="ECO:0000318"/>
    <property type="project" value="GO_Central"/>
</dbReference>
<dbReference type="CDD" id="cd02248">
    <property type="entry name" value="Peptidase_C1A"/>
    <property type="match status" value="1"/>
</dbReference>
<dbReference type="FunFam" id="1.10.287.2250:FF:000003">
    <property type="entry name" value="Cathepsin L"/>
    <property type="match status" value="1"/>
</dbReference>
<dbReference type="FunFam" id="3.90.70.10:FF:000006">
    <property type="entry name" value="Cathepsin S"/>
    <property type="match status" value="1"/>
</dbReference>
<dbReference type="Gene3D" id="1.10.287.2250">
    <property type="match status" value="1"/>
</dbReference>
<dbReference type="Gene3D" id="3.90.70.10">
    <property type="entry name" value="Cysteine proteinases"/>
    <property type="match status" value="1"/>
</dbReference>
<dbReference type="InterPro" id="IPR038765">
    <property type="entry name" value="Papain-like_cys_pep_sf"/>
</dbReference>
<dbReference type="InterPro" id="IPR025661">
    <property type="entry name" value="Pept_asp_AS"/>
</dbReference>
<dbReference type="InterPro" id="IPR025660">
    <property type="entry name" value="Pept_his_AS"/>
</dbReference>
<dbReference type="InterPro" id="IPR013128">
    <property type="entry name" value="Peptidase_C1A"/>
</dbReference>
<dbReference type="InterPro" id="IPR000668">
    <property type="entry name" value="Peptidase_C1A_C"/>
</dbReference>
<dbReference type="InterPro" id="IPR039417">
    <property type="entry name" value="Peptidase_C1A_papain-like"/>
</dbReference>
<dbReference type="InterPro" id="IPR013201">
    <property type="entry name" value="Prot_inhib_I29"/>
</dbReference>
<dbReference type="PANTHER" id="PTHR12411">
    <property type="entry name" value="CYSTEINE PROTEASE FAMILY C1-RELATED"/>
    <property type="match status" value="1"/>
</dbReference>
<dbReference type="Pfam" id="PF08246">
    <property type="entry name" value="Inhibitor_I29"/>
    <property type="match status" value="1"/>
</dbReference>
<dbReference type="Pfam" id="PF00112">
    <property type="entry name" value="Peptidase_C1"/>
    <property type="match status" value="1"/>
</dbReference>
<dbReference type="PRINTS" id="PR00705">
    <property type="entry name" value="PAPAIN"/>
</dbReference>
<dbReference type="SMART" id="SM00848">
    <property type="entry name" value="Inhibitor_I29"/>
    <property type="match status" value="1"/>
</dbReference>
<dbReference type="SMART" id="SM00645">
    <property type="entry name" value="Pept_C1"/>
    <property type="match status" value="1"/>
</dbReference>
<dbReference type="SUPFAM" id="SSF54001">
    <property type="entry name" value="Cysteine proteinases"/>
    <property type="match status" value="1"/>
</dbReference>
<dbReference type="PROSITE" id="PS00640">
    <property type="entry name" value="THIOL_PROTEASE_ASN"/>
    <property type="match status" value="1"/>
</dbReference>
<dbReference type="PROSITE" id="PS00639">
    <property type="entry name" value="THIOL_PROTEASE_HIS"/>
    <property type="match status" value="1"/>
</dbReference>
<feature type="signal peptide" evidence="2">
    <location>
        <begin position="1"/>
        <end position="20"/>
    </location>
</feature>
<feature type="propeptide" id="PRO_0000026234" description="Activation peptide" evidence="2">
    <location>
        <begin position="21"/>
        <end position="124"/>
    </location>
</feature>
<feature type="chain" id="PRO_0000026235" description="Cathepsin Q">
    <location>
        <begin position="125"/>
        <end position="343"/>
    </location>
</feature>
<feature type="active site" evidence="1">
    <location>
        <position position="149"/>
    </location>
</feature>
<feature type="active site" evidence="1">
    <location>
        <position position="286"/>
    </location>
</feature>
<feature type="active site" evidence="1">
    <location>
        <position position="310"/>
    </location>
</feature>
<feature type="glycosylation site" description="N-linked (GlcNAc...) asparagine" evidence="2">
    <location>
        <position position="228"/>
    </location>
</feature>
<feature type="glycosylation site" description="N-linked (GlcNAc...) asparagine" evidence="2">
    <location>
        <position position="298"/>
    </location>
</feature>
<feature type="disulfide bond" evidence="1">
    <location>
        <begin position="146"/>
        <end position="189"/>
    </location>
</feature>
<feature type="disulfide bond" evidence="1">
    <location>
        <begin position="180"/>
        <end position="222"/>
    </location>
</feature>
<feature type="disulfide bond" evidence="1">
    <location>
        <begin position="280"/>
        <end position="332"/>
    </location>
</feature>
<proteinExistence type="evidence at transcript level"/>
<sequence length="343" mass="39052">MTPAVFLVILCLGVVPGASALDLSLDVQWQEWKIKYEKLYSPEEEVLKRVVWEENVKKIELHNRENSLGKNTYTMEINDFADMTDEEFKDMIIGFQLPVHNTEKRLWKRALGSFFPNSWNWRDALPKFVDWRNEGYVTRVRKQGGCSSCWAFPVTGAIEGQMFKKTGKLIPLSVQNLIDCSKPQGNRGCLWGNTYNAFQYVLHNGGLEAEATYPYERKEGVCRYNPKNSSAKITGFVVLPESEDVLMDAVATKGPIATGVHVISSSFRFYQKGVYHEPKCSSYVNHAVLVVGYGFEGNETDGNNYWLIKNSWGKRWGLRGYMKIAKDRNNHCAIASLAQYPTV</sequence>
<accession>Q9QZE3</accession>
<name>CATQ_RAT</name>
<keyword id="KW-1015">Disulfide bond</keyword>
<keyword id="KW-0325">Glycoprotein</keyword>
<keyword id="KW-0378">Hydrolase</keyword>
<keyword id="KW-0458">Lysosome</keyword>
<keyword id="KW-0645">Protease</keyword>
<keyword id="KW-1185">Reference proteome</keyword>
<keyword id="KW-0732">Signal</keyword>
<keyword id="KW-0788">Thiol protease</keyword>
<keyword id="KW-0865">Zymogen</keyword>
<protein>
    <recommendedName>
        <fullName>Cathepsin Q</fullName>
        <ecNumber>3.4.22.-</ecNumber>
    </recommendedName>
</protein>